<accession>P56512</accession>
<accession>F9UL11</accession>
<accession>P26299</accession>
<accession>Q8GMW6</accession>
<proteinExistence type="inferred from homology"/>
<name>LDH1_LACPL</name>
<dbReference type="EC" id="1.1.1.27" evidence="1"/>
<dbReference type="EMBL" id="X70926">
    <property type="protein sequence ID" value="CAA50277.1"/>
    <property type="molecule type" value="Genomic_DNA"/>
</dbReference>
<dbReference type="EMBL" id="AB177763">
    <property type="protein sequence ID" value="BAD16691.1"/>
    <property type="status" value="ALT_INIT"/>
    <property type="molecule type" value="Genomic_DNA"/>
</dbReference>
<dbReference type="EMBL" id="AL935263">
    <property type="protein sequence ID" value="CCC78026.1"/>
    <property type="molecule type" value="Genomic_DNA"/>
</dbReference>
<dbReference type="EMBL" id="AF548372">
    <property type="protein sequence ID" value="AAN40797.1"/>
    <property type="molecule type" value="Genomic_DNA"/>
</dbReference>
<dbReference type="PIR" id="A36957">
    <property type="entry name" value="A36957"/>
</dbReference>
<dbReference type="RefSeq" id="WP_003642078.1">
    <property type="nucleotide sequence ID" value="NC_004567.2"/>
</dbReference>
<dbReference type="RefSeq" id="YP_004888540.1">
    <property type="nucleotide sequence ID" value="NC_004567.2"/>
</dbReference>
<dbReference type="SMR" id="P56512"/>
<dbReference type="STRING" id="220668.lp_0537"/>
<dbReference type="EnsemblBacteria" id="CCC78026">
    <property type="protein sequence ID" value="CCC78026"/>
    <property type="gene ID" value="lp_0537"/>
</dbReference>
<dbReference type="KEGG" id="lpl:lp_0537"/>
<dbReference type="PATRIC" id="fig|220668.9.peg.444"/>
<dbReference type="eggNOG" id="COG0039">
    <property type="taxonomic scope" value="Bacteria"/>
</dbReference>
<dbReference type="HOGENOM" id="CLU_045401_1_1_9"/>
<dbReference type="OrthoDB" id="9802969at2"/>
<dbReference type="PhylomeDB" id="P56512"/>
<dbReference type="BRENDA" id="1.1.1.27">
    <property type="organism ID" value="2849"/>
</dbReference>
<dbReference type="SABIO-RK" id="P56512"/>
<dbReference type="UniPathway" id="UPA00554">
    <property type="reaction ID" value="UER00611"/>
</dbReference>
<dbReference type="Proteomes" id="UP000000432">
    <property type="component" value="Chromosome"/>
</dbReference>
<dbReference type="GO" id="GO:0005737">
    <property type="term" value="C:cytoplasm"/>
    <property type="evidence" value="ECO:0007669"/>
    <property type="project" value="UniProtKB-SubCell"/>
</dbReference>
<dbReference type="GO" id="GO:0004459">
    <property type="term" value="F:L-lactate dehydrogenase activity"/>
    <property type="evidence" value="ECO:0007669"/>
    <property type="project" value="UniProtKB-UniRule"/>
</dbReference>
<dbReference type="GO" id="GO:0006096">
    <property type="term" value="P:glycolytic process"/>
    <property type="evidence" value="ECO:0007669"/>
    <property type="project" value="UniProtKB-UniRule"/>
</dbReference>
<dbReference type="GO" id="GO:0006089">
    <property type="term" value="P:lactate metabolic process"/>
    <property type="evidence" value="ECO:0007669"/>
    <property type="project" value="TreeGrafter"/>
</dbReference>
<dbReference type="CDD" id="cd05291">
    <property type="entry name" value="HicDH_like"/>
    <property type="match status" value="1"/>
</dbReference>
<dbReference type="FunFam" id="3.40.50.720:FF:000018">
    <property type="entry name" value="Malate dehydrogenase"/>
    <property type="match status" value="1"/>
</dbReference>
<dbReference type="Gene3D" id="3.90.110.10">
    <property type="entry name" value="Lactate dehydrogenase/glycoside hydrolase, family 4, C-terminal"/>
    <property type="match status" value="1"/>
</dbReference>
<dbReference type="Gene3D" id="3.40.50.720">
    <property type="entry name" value="NAD(P)-binding Rossmann-like Domain"/>
    <property type="match status" value="1"/>
</dbReference>
<dbReference type="HAMAP" id="MF_00488">
    <property type="entry name" value="Lactate_dehydrog"/>
    <property type="match status" value="1"/>
</dbReference>
<dbReference type="InterPro" id="IPR001557">
    <property type="entry name" value="L-lactate/malate_DH"/>
</dbReference>
<dbReference type="InterPro" id="IPR011304">
    <property type="entry name" value="L-lactate_DH"/>
</dbReference>
<dbReference type="InterPro" id="IPR018177">
    <property type="entry name" value="L-lactate_DH_AS"/>
</dbReference>
<dbReference type="InterPro" id="IPR022383">
    <property type="entry name" value="Lactate/malate_DH_C"/>
</dbReference>
<dbReference type="InterPro" id="IPR001236">
    <property type="entry name" value="Lactate/malate_DH_N"/>
</dbReference>
<dbReference type="InterPro" id="IPR015955">
    <property type="entry name" value="Lactate_DH/Glyco_Ohase_4_C"/>
</dbReference>
<dbReference type="InterPro" id="IPR036291">
    <property type="entry name" value="NAD(P)-bd_dom_sf"/>
</dbReference>
<dbReference type="NCBIfam" id="TIGR01771">
    <property type="entry name" value="L-LDH-NAD"/>
    <property type="match status" value="1"/>
</dbReference>
<dbReference type="NCBIfam" id="NF000824">
    <property type="entry name" value="PRK00066.1"/>
    <property type="match status" value="1"/>
</dbReference>
<dbReference type="PANTHER" id="PTHR43128">
    <property type="entry name" value="L-2-HYDROXYCARBOXYLATE DEHYDROGENASE (NAD(P)(+))"/>
    <property type="match status" value="1"/>
</dbReference>
<dbReference type="PANTHER" id="PTHR43128:SF16">
    <property type="entry name" value="L-LACTATE DEHYDROGENASE"/>
    <property type="match status" value="1"/>
</dbReference>
<dbReference type="Pfam" id="PF02866">
    <property type="entry name" value="Ldh_1_C"/>
    <property type="match status" value="1"/>
</dbReference>
<dbReference type="Pfam" id="PF00056">
    <property type="entry name" value="Ldh_1_N"/>
    <property type="match status" value="1"/>
</dbReference>
<dbReference type="PIRSF" id="PIRSF000102">
    <property type="entry name" value="Lac_mal_DH"/>
    <property type="match status" value="1"/>
</dbReference>
<dbReference type="PRINTS" id="PR00086">
    <property type="entry name" value="LLDHDRGNASE"/>
</dbReference>
<dbReference type="SUPFAM" id="SSF56327">
    <property type="entry name" value="LDH C-terminal domain-like"/>
    <property type="match status" value="1"/>
</dbReference>
<dbReference type="SUPFAM" id="SSF51735">
    <property type="entry name" value="NAD(P)-binding Rossmann-fold domains"/>
    <property type="match status" value="1"/>
</dbReference>
<dbReference type="PROSITE" id="PS00064">
    <property type="entry name" value="L_LDH"/>
    <property type="match status" value="1"/>
</dbReference>
<feature type="chain" id="PRO_0000168357" description="L-lactate dehydrogenase 1">
    <location>
        <begin position="1"/>
        <end position="320"/>
    </location>
</feature>
<feature type="active site" description="Proton acceptor" evidence="1">
    <location>
        <position position="179"/>
    </location>
</feature>
<feature type="binding site" evidence="1">
    <location>
        <position position="18"/>
    </location>
    <ligand>
        <name>NAD(+)</name>
        <dbReference type="ChEBI" id="CHEBI:57540"/>
    </ligand>
</feature>
<feature type="binding site" evidence="1">
    <location>
        <position position="39"/>
    </location>
    <ligand>
        <name>NAD(+)</name>
        <dbReference type="ChEBI" id="CHEBI:57540"/>
    </ligand>
</feature>
<feature type="binding site" evidence="1">
    <location>
        <position position="44"/>
    </location>
    <ligand>
        <name>NAD(+)</name>
        <dbReference type="ChEBI" id="CHEBI:57540"/>
    </ligand>
</feature>
<feature type="binding site" evidence="1">
    <location>
        <position position="69"/>
    </location>
    <ligand>
        <name>NAD(+)</name>
        <dbReference type="ChEBI" id="CHEBI:57540"/>
    </ligand>
</feature>
<feature type="binding site" evidence="1">
    <location>
        <begin position="83"/>
        <end position="84"/>
    </location>
    <ligand>
        <name>NAD(+)</name>
        <dbReference type="ChEBI" id="CHEBI:57540"/>
    </ligand>
</feature>
<feature type="binding site" evidence="1">
    <location>
        <position position="86"/>
    </location>
    <ligand>
        <name>substrate</name>
    </ligand>
</feature>
<feature type="binding site" evidence="1">
    <location>
        <position position="92"/>
    </location>
    <ligand>
        <name>substrate</name>
    </ligand>
</feature>
<feature type="binding site" evidence="1">
    <location>
        <position position="105"/>
    </location>
    <ligand>
        <name>NAD(+)</name>
        <dbReference type="ChEBI" id="CHEBI:57540"/>
    </ligand>
</feature>
<feature type="binding site" evidence="1">
    <location>
        <begin position="122"/>
        <end position="124"/>
    </location>
    <ligand>
        <name>NAD(+)</name>
        <dbReference type="ChEBI" id="CHEBI:57540"/>
    </ligand>
</feature>
<feature type="binding site" evidence="1">
    <location>
        <begin position="124"/>
        <end position="127"/>
    </location>
    <ligand>
        <name>substrate</name>
    </ligand>
</feature>
<feature type="binding site" evidence="1">
    <location>
        <position position="147"/>
    </location>
    <ligand>
        <name>NAD(+)</name>
        <dbReference type="ChEBI" id="CHEBI:57540"/>
    </ligand>
</feature>
<feature type="binding site" evidence="1">
    <location>
        <begin position="152"/>
        <end position="155"/>
    </location>
    <ligand>
        <name>substrate</name>
    </ligand>
</feature>
<feature type="binding site" evidence="1">
    <location>
        <position position="232"/>
    </location>
    <ligand>
        <name>substrate</name>
    </ligand>
</feature>
<feature type="modified residue" description="Phosphotyrosine" evidence="1">
    <location>
        <position position="223"/>
    </location>
</feature>
<feature type="sequence conflict" description="In Ref. 1; CAA50277." evidence="2" ref="1">
    <original>D</original>
    <variation>H</variation>
    <location>
        <position position="54"/>
    </location>
</feature>
<feature type="sequence conflict" description="In Ref. 2; BAD16691." evidence="2" ref="2">
    <original>K</original>
    <variation>Q</variation>
    <location>
        <position position="245"/>
    </location>
</feature>
<feature type="sequence conflict" description="In Ref. 1; CAA50277." evidence="2" ref="1">
    <original>S</original>
    <variation>C</variation>
    <location>
        <position position="302"/>
    </location>
</feature>
<sequence length="320" mass="34206">MSSMPNHQKVVLVGDGAVGSSYAFAMAQQGIAEEFVIVDVVKDRTKGDALDLEDAQAFTAPKKIYSGEYSDCKDADLVVITAGAPQKPGESRLDLVNKNLNILSSIVKPVVDSGFDGIFLVAANPVDILTYATWKFSGFPKDRVIGSGTSLDSSRLRVALGKQFNVDPRSVDAYIMGEHGDSEFAAYSTATIGTRPVRDVAKEQGVSDEDLAKLEDGVRNKAYDIINLKGATFYGIGTALMRISKAILRDENAVLPVGAYMDGQYGLNDIYIGTPAVIGGTGLKQIIESPLSADELKKMQDSAATLKKVLNDGLAELENK</sequence>
<protein>
    <recommendedName>
        <fullName evidence="1">L-lactate dehydrogenase 1</fullName>
        <shortName evidence="1">L-LDH 1</shortName>
        <ecNumber evidence="1">1.1.1.27</ecNumber>
    </recommendedName>
</protein>
<organism>
    <name type="scientific">Lactiplantibacillus plantarum (strain ATCC BAA-793 / NCIMB 8826 / WCFS1)</name>
    <name type="common">Lactobacillus plantarum</name>
    <dbReference type="NCBI Taxonomy" id="220668"/>
    <lineage>
        <taxon>Bacteria</taxon>
        <taxon>Bacillati</taxon>
        <taxon>Bacillota</taxon>
        <taxon>Bacilli</taxon>
        <taxon>Lactobacillales</taxon>
        <taxon>Lactobacillaceae</taxon>
        <taxon>Lactiplantibacillus</taxon>
    </lineage>
</organism>
<evidence type="ECO:0000255" key="1">
    <source>
        <dbReference type="HAMAP-Rule" id="MF_00488"/>
    </source>
</evidence>
<evidence type="ECO:0000305" key="2"/>
<keyword id="KW-0963">Cytoplasm</keyword>
<keyword id="KW-0520">NAD</keyword>
<keyword id="KW-0560">Oxidoreductase</keyword>
<keyword id="KW-0597">Phosphoprotein</keyword>
<keyword id="KW-1185">Reference proteome</keyword>
<gene>
    <name evidence="1" type="primary">ldh1</name>
    <name type="synonym">l-ldhL</name>
    <name type="synonym">ldh</name>
    <name type="synonym">ldhL</name>
    <name type="synonym">ldhL1</name>
    <name type="ordered locus">lp_0537</name>
</gene>
<reference key="1">
    <citation type="journal article" date="1994" name="J. Bacteriol.">
        <title>Lactobacillus plantarum ldhL gene: overexpression and deletion.</title>
        <authorList>
            <person name="Ferain T."/>
            <person name="Garmyn D."/>
            <person name="Bernard N."/>
            <person name="Hols P."/>
            <person name="Delcour J."/>
        </authorList>
    </citation>
    <scope>NUCLEOTIDE SEQUENCE [GENOMIC DNA]</scope>
    <source>
        <strain>DG301</strain>
    </source>
</reference>
<reference key="2">
    <citation type="submission" date="2004-04" db="EMBL/GenBank/DDBJ databases">
        <title>Expression of Derf 7 gene in Lactobacillus plantarum.</title>
        <authorList>
            <person name="Kim J."/>
            <person name="Tsutsui M."/>
            <person name="Yamashita M."/>
            <person name="Murooka Y."/>
        </authorList>
    </citation>
    <scope>NUCLEOTIDE SEQUENCE [GENOMIC DNA]</scope>
    <source>
        <strain>L137</strain>
    </source>
</reference>
<reference key="3">
    <citation type="journal article" date="2003" name="Proc. Natl. Acad. Sci. U.S.A.">
        <title>Complete genome sequence of Lactobacillus plantarum WCFS1.</title>
        <authorList>
            <person name="Kleerebezem M."/>
            <person name="Boekhorst J."/>
            <person name="van Kranenburg R."/>
            <person name="Molenaar D."/>
            <person name="Kuipers O.P."/>
            <person name="Leer R."/>
            <person name="Tarchini R."/>
            <person name="Peters S.A."/>
            <person name="Sandbrink H.M."/>
            <person name="Fiers M.W.E.J."/>
            <person name="Stiekema W."/>
            <person name="Klein Lankhorst R.M."/>
            <person name="Bron P.A."/>
            <person name="Hoffer S.M."/>
            <person name="Nierop Groot M.N."/>
            <person name="Kerkhoven R."/>
            <person name="De Vries M."/>
            <person name="Ursing B."/>
            <person name="De Vos W.M."/>
            <person name="Siezen R.J."/>
        </authorList>
    </citation>
    <scope>NUCLEOTIDE SEQUENCE [LARGE SCALE GENOMIC DNA]</scope>
    <source>
        <strain>ATCC BAA-793 / NCIMB 8826 / WCFS1</strain>
    </source>
</reference>
<reference key="4">
    <citation type="journal article" date="2012" name="J. Bacteriol.">
        <title>Complete resequencing and reannotation of the Lactobacillus plantarum WCFS1 genome.</title>
        <authorList>
            <person name="Siezen R.J."/>
            <person name="Francke C."/>
            <person name="Renckens B."/>
            <person name="Boekhorst J."/>
            <person name="Wels M."/>
            <person name="Kleerebezem M."/>
            <person name="van Hijum S.A."/>
        </authorList>
    </citation>
    <scope>NUCLEOTIDE SEQUENCE [LARGE SCALE GENOMIC DNA]</scope>
    <scope>GENOME REANNOTATION</scope>
    <source>
        <strain>ATCC BAA-793 / NCIMB 8826 / WCFS1</strain>
    </source>
</reference>
<reference key="5">
    <citation type="submission" date="2002-09" db="EMBL/GenBank/DDBJ databases">
        <title>Expression of LDH gene in Candida kefyr isolated from Mongolian Koumiss.</title>
        <authorList>
            <person name="Ham J."/>
            <person name="Kim H."/>
            <person name="Kim H."/>
        </authorList>
    </citation>
    <scope>NUCLEOTIDE SEQUENCE [GENOMIC DNA] OF 2-320</scope>
</reference>
<comment type="function">
    <text evidence="1">Catalyzes the conversion of lactate to pyruvate.</text>
</comment>
<comment type="catalytic activity">
    <reaction evidence="1">
        <text>(S)-lactate + NAD(+) = pyruvate + NADH + H(+)</text>
        <dbReference type="Rhea" id="RHEA:23444"/>
        <dbReference type="ChEBI" id="CHEBI:15361"/>
        <dbReference type="ChEBI" id="CHEBI:15378"/>
        <dbReference type="ChEBI" id="CHEBI:16651"/>
        <dbReference type="ChEBI" id="CHEBI:57540"/>
        <dbReference type="ChEBI" id="CHEBI:57945"/>
        <dbReference type="EC" id="1.1.1.27"/>
    </reaction>
</comment>
<comment type="pathway">
    <text evidence="1">Fermentation; pyruvate fermentation to lactate; (S)-lactate from pyruvate: step 1/1.</text>
</comment>
<comment type="subunit">
    <text evidence="1">Homotetramer.</text>
</comment>
<comment type="subcellular location">
    <subcellularLocation>
        <location evidence="1">Cytoplasm</location>
    </subcellularLocation>
</comment>
<comment type="similarity">
    <text evidence="1 2">Belongs to the LDH/MDH superfamily. LDH family.</text>
</comment>
<comment type="sequence caution" evidence="2">
    <conflict type="erroneous initiation">
        <sequence resource="EMBL-CDS" id="BAD16691"/>
    </conflict>
</comment>